<protein>
    <recommendedName>
        <fullName>Protein DP71L</fullName>
    </recommendedName>
    <alternativeName>
        <fullName>MyD116 homolog</fullName>
    </alternativeName>
</protein>
<proteinExistence type="inferred from homology"/>
<accession>P0C755</accession>
<name>DP71L_ASFM2</name>
<gene>
    <name type="ordered locus">Mal-166</name>
</gene>
<evidence type="ECO:0000250" key="1">
    <source>
        <dbReference type="UniProtKB" id="Q65212"/>
    </source>
</evidence>
<evidence type="ECO:0000256" key="2">
    <source>
        <dbReference type="SAM" id="MobiDB-lite"/>
    </source>
</evidence>
<evidence type="ECO:0000305" key="3"/>
<organismHost>
    <name type="scientific">Ornithodoros</name>
    <name type="common">relapsing fever ticks</name>
    <dbReference type="NCBI Taxonomy" id="6937"/>
</organismHost>
<organismHost>
    <name type="scientific">Phacochoerus aethiopicus</name>
    <name type="common">Warthog</name>
    <dbReference type="NCBI Taxonomy" id="85517"/>
</organismHost>
<organismHost>
    <name type="scientific">Phacochoerus africanus</name>
    <name type="common">Warthog</name>
    <dbReference type="NCBI Taxonomy" id="41426"/>
</organismHost>
<organismHost>
    <name type="scientific">Potamochoerus larvatus</name>
    <name type="common">Bushpig</name>
    <dbReference type="NCBI Taxonomy" id="273792"/>
</organismHost>
<organismHost>
    <name type="scientific">Sus scrofa</name>
    <name type="common">Pig</name>
    <dbReference type="NCBI Taxonomy" id="9823"/>
</organismHost>
<feature type="chain" id="PRO_0000379085" description="Protein DP71L">
    <location>
        <begin position="1"/>
        <end position="184"/>
    </location>
</feature>
<feature type="region of interest" description="Disordered" evidence="2">
    <location>
        <begin position="1"/>
        <end position="41"/>
    </location>
</feature>
<feature type="region of interest" description="Important for host CHOP inhibition" evidence="1">
    <location>
        <begin position="125"/>
        <end position="127"/>
    </location>
</feature>
<feature type="region of interest" description="Important for host CHOP inhibition" evidence="1">
    <location>
        <begin position="169"/>
        <end position="173"/>
    </location>
</feature>
<feature type="compositionally biased region" description="Basic residues" evidence="2">
    <location>
        <begin position="1"/>
        <end position="15"/>
    </location>
</feature>
<sequence>MSRRNKRSRRRRKKPLNTIQPGPSKPSAQDEPIKSVSHHSSKIGTNPMLAFILGGNEDLSDDSDWDEDFSLENTLMPLNEVSLKGKHDSKHFNKGFDNNTALHEVNTKWEAFYSSVKIRQRDVKVYFATDDILIKVREADDIDRKGPWEQAAVDRLRFQRRIADTEKILSAVLLRKKLNPMEHE</sequence>
<keyword id="KW-0945">Host-virus interaction</keyword>
<keyword id="KW-1090">Inhibition of host innate immune response by virus</keyword>
<keyword id="KW-1114">Inhibition of host interferon signaling pathway by virus</keyword>
<keyword id="KW-0922">Interferon antiviral system evasion</keyword>
<keyword id="KW-0426">Late protein</keyword>
<keyword id="KW-1126">Modulation of host PP1 activity by virus</keyword>
<keyword id="KW-0899">Viral immunoevasion</keyword>
<organism>
    <name type="scientific">African swine fever virus (isolate Tick/Malawi/Lil 20-1/1983)</name>
    <name type="common">ASFV</name>
    <dbReference type="NCBI Taxonomy" id="10500"/>
    <lineage>
        <taxon>Viruses</taxon>
        <taxon>Varidnaviria</taxon>
        <taxon>Bamfordvirae</taxon>
        <taxon>Nucleocytoviricota</taxon>
        <taxon>Pokkesviricetes</taxon>
        <taxon>Asfuvirales</taxon>
        <taxon>Asfarviridae</taxon>
        <taxon>Asfivirus</taxon>
        <taxon>African swine fever virus</taxon>
    </lineage>
</organism>
<dbReference type="EMBL" id="AY261361">
    <property type="status" value="NOT_ANNOTATED_CDS"/>
    <property type="molecule type" value="Genomic_DNA"/>
</dbReference>
<dbReference type="SMR" id="P0C755"/>
<dbReference type="Proteomes" id="UP000000860">
    <property type="component" value="Segment"/>
</dbReference>
<dbReference type="GO" id="GO:0004865">
    <property type="term" value="F:protein serine/threonine phosphatase inhibitor activity"/>
    <property type="evidence" value="ECO:0007669"/>
    <property type="project" value="UniProtKB-KW"/>
</dbReference>
<dbReference type="GO" id="GO:0060255">
    <property type="term" value="P:regulation of macromolecule metabolic process"/>
    <property type="evidence" value="ECO:0007669"/>
    <property type="project" value="UniProtKB-ARBA"/>
</dbReference>
<dbReference type="GO" id="GO:0080090">
    <property type="term" value="P:regulation of primary metabolic process"/>
    <property type="evidence" value="ECO:0007669"/>
    <property type="project" value="UniProtKB-ARBA"/>
</dbReference>
<dbReference type="GO" id="GO:0034976">
    <property type="term" value="P:response to endoplasmic reticulum stress"/>
    <property type="evidence" value="ECO:0007669"/>
    <property type="project" value="TreeGrafter"/>
</dbReference>
<dbReference type="GO" id="GO:0052170">
    <property type="term" value="P:symbiont-mediated suppression of host innate immune response"/>
    <property type="evidence" value="ECO:0007669"/>
    <property type="project" value="UniProtKB-KW"/>
</dbReference>
<dbReference type="GO" id="GO:0039606">
    <property type="term" value="P:symbiont-mediated suppression of host translation initiation"/>
    <property type="evidence" value="ECO:0007669"/>
    <property type="project" value="UniProtKB-KW"/>
</dbReference>
<dbReference type="GO" id="GO:0039502">
    <property type="term" value="P:symbiont-mediated suppression of host type I interferon-mediated signaling pathway"/>
    <property type="evidence" value="ECO:0007669"/>
    <property type="project" value="UniProtKB-KW"/>
</dbReference>
<dbReference type="InterPro" id="IPR051254">
    <property type="entry name" value="PPP1R15"/>
</dbReference>
<dbReference type="InterPro" id="IPR019523">
    <property type="entry name" value="Prot_Pase1_reg-su15A/B_C"/>
</dbReference>
<dbReference type="PANTHER" id="PTHR16489">
    <property type="entry name" value="GH11727P"/>
    <property type="match status" value="1"/>
</dbReference>
<dbReference type="PANTHER" id="PTHR16489:SF12">
    <property type="entry name" value="GH11727P"/>
    <property type="match status" value="1"/>
</dbReference>
<dbReference type="Pfam" id="PF10488">
    <property type="entry name" value="PP1c_bdg"/>
    <property type="match status" value="1"/>
</dbReference>
<reference key="1">
    <citation type="submission" date="2003-03" db="EMBL/GenBank/DDBJ databases">
        <title>African swine fever virus genomes.</title>
        <authorList>
            <person name="Kutish G.F."/>
            <person name="Rock D.L."/>
        </authorList>
    </citation>
    <scope>NUCLEOTIDE SEQUENCE [LARGE SCALE GENOMIC DNA]</scope>
</reference>
<comment type="function">
    <text evidence="1">Interacts with the host phosphatase PP1 catalytic subunit (PPP1CB) and recruits it to dephosphorylate EIF2S1/eIF2alpha and therefore restores the host translation that has been shut-down by the host. Also inhibits the EIF2S1/eIF2alpha-ATF4-DDIT3/CHOP pathway.</text>
</comment>
<comment type="subunit">
    <text evidence="1">Interacts (via C-terminus) with host PPP1CB.</text>
</comment>
<comment type="induction">
    <text evidence="3">Expressed in the late phase of the viral replicative cycle.</text>
</comment>
<comment type="similarity">
    <text evidence="3">Belongs to the asfivirus DP71L family.</text>
</comment>